<reference key="1">
    <citation type="journal article" date="2012" name="Nat. Genet.">
        <title>Lifestyle transitions in plant pathogenic Colletotrichum fungi deciphered by genome and transcriptome analyses.</title>
        <authorList>
            <person name="O'Connell R.J."/>
            <person name="Thon M.R."/>
            <person name="Hacquard S."/>
            <person name="Amyotte S.G."/>
            <person name="Kleemann J."/>
            <person name="Torres M.F."/>
            <person name="Damm U."/>
            <person name="Buiate E.A."/>
            <person name="Epstein L."/>
            <person name="Alkan N."/>
            <person name="Altmueller J."/>
            <person name="Alvarado-Balderrama L."/>
            <person name="Bauser C.A."/>
            <person name="Becker C."/>
            <person name="Birren B.W."/>
            <person name="Chen Z."/>
            <person name="Choi J."/>
            <person name="Crouch J.A."/>
            <person name="Duvick J.P."/>
            <person name="Farman M.A."/>
            <person name="Gan P."/>
            <person name="Heiman D."/>
            <person name="Henrissat B."/>
            <person name="Howard R.J."/>
            <person name="Kabbage M."/>
            <person name="Koch C."/>
            <person name="Kracher B."/>
            <person name="Kubo Y."/>
            <person name="Law A.D."/>
            <person name="Lebrun M.-H."/>
            <person name="Lee Y.-H."/>
            <person name="Miyara I."/>
            <person name="Moore N."/>
            <person name="Neumann U."/>
            <person name="Nordstroem K."/>
            <person name="Panaccione D.G."/>
            <person name="Panstruga R."/>
            <person name="Place M."/>
            <person name="Proctor R.H."/>
            <person name="Prusky D."/>
            <person name="Rech G."/>
            <person name="Reinhardt R."/>
            <person name="Rollins J.A."/>
            <person name="Rounsley S."/>
            <person name="Schardl C.L."/>
            <person name="Schwartz D.C."/>
            <person name="Shenoy N."/>
            <person name="Shirasu K."/>
            <person name="Sikhakolli U.R."/>
            <person name="Stueber K."/>
            <person name="Sukno S.A."/>
            <person name="Sweigard J.A."/>
            <person name="Takano Y."/>
            <person name="Takahara H."/>
            <person name="Trail F."/>
            <person name="van der Does H.C."/>
            <person name="Voll L.M."/>
            <person name="Will I."/>
            <person name="Young S."/>
            <person name="Zeng Q."/>
            <person name="Zhang J."/>
            <person name="Zhou S."/>
            <person name="Dickman M.B."/>
            <person name="Schulze-Lefert P."/>
            <person name="Ver Loren van Themaat E."/>
            <person name="Ma L.-J."/>
            <person name="Vaillancourt L.J."/>
        </authorList>
    </citation>
    <scope>NUCLEOTIDE SEQUENCE [LARGE SCALE GENOMIC DNA]</scope>
    <source>
        <strain>M1.001 / M2 / FGSC 10212</strain>
    </source>
</reference>
<organism>
    <name type="scientific">Colletotrichum graminicola (strain M1.001 / M2 / FGSC 10212)</name>
    <name type="common">Maize anthracnose fungus</name>
    <name type="synonym">Glomerella graminicola</name>
    <dbReference type="NCBI Taxonomy" id="645133"/>
    <lineage>
        <taxon>Eukaryota</taxon>
        <taxon>Fungi</taxon>
        <taxon>Dikarya</taxon>
        <taxon>Ascomycota</taxon>
        <taxon>Pezizomycotina</taxon>
        <taxon>Sordariomycetes</taxon>
        <taxon>Hypocreomycetidae</taxon>
        <taxon>Glomerellales</taxon>
        <taxon>Glomerellaceae</taxon>
        <taxon>Colletotrichum</taxon>
        <taxon>Colletotrichum graminicola species complex</taxon>
    </lineage>
</organism>
<protein>
    <recommendedName>
        <fullName>Tethering factor for nuclear proteasome STS1</fullName>
    </recommendedName>
</protein>
<keyword id="KW-0963">Cytoplasm</keyword>
<keyword id="KW-0539">Nucleus</keyword>
<keyword id="KW-0653">Protein transport</keyword>
<keyword id="KW-1185">Reference proteome</keyword>
<keyword id="KW-0813">Transport</keyword>
<gene>
    <name type="primary">STS1</name>
    <name type="ORF">GLRG_04117</name>
</gene>
<proteinExistence type="inferred from homology"/>
<name>STS1_COLGM</name>
<comment type="function">
    <text evidence="1">Involved in ubiquitin-mediated protein degradation. Regulatory factor in the ubiquitin/proteasome pathway that controls the turnover of proteasome substrates. Targets proteasomes to the nucleus and facilitates the degradation of nuclear proteins (By similarity).</text>
</comment>
<comment type="subunit">
    <text evidence="1">Binds the proteasome.</text>
</comment>
<comment type="subcellular location">
    <subcellularLocation>
        <location evidence="1">Cytoplasm</location>
    </subcellularLocation>
    <subcellularLocation>
        <location evidence="1">Nucleus</location>
    </subcellularLocation>
</comment>
<comment type="similarity">
    <text evidence="3">Belongs to the cut8/STS1 family.</text>
</comment>
<evidence type="ECO:0000250" key="1"/>
<evidence type="ECO:0000256" key="2">
    <source>
        <dbReference type="SAM" id="MobiDB-lite"/>
    </source>
</evidence>
<evidence type="ECO:0000305" key="3"/>
<accession>E3QDN5</accession>
<feature type="chain" id="PRO_0000409409" description="Tethering factor for nuclear proteasome STS1">
    <location>
        <begin position="1"/>
        <end position="308"/>
    </location>
</feature>
<feature type="region of interest" description="Disordered" evidence="2">
    <location>
        <begin position="1"/>
        <end position="75"/>
    </location>
</feature>
<feature type="region of interest" description="Disordered" evidence="2">
    <location>
        <begin position="269"/>
        <end position="290"/>
    </location>
</feature>
<feature type="compositionally biased region" description="Polar residues" evidence="2">
    <location>
        <begin position="20"/>
        <end position="35"/>
    </location>
</feature>
<feature type="compositionally biased region" description="Low complexity" evidence="2">
    <location>
        <begin position="48"/>
        <end position="61"/>
    </location>
</feature>
<feature type="compositionally biased region" description="Polar residues" evidence="2">
    <location>
        <begin position="276"/>
        <end position="290"/>
    </location>
</feature>
<sequence>MNVLLSPQPPLFQHPHETNRISPSRSLSPFHNMSTSRKRKADEDGDEMSMSPRSSPAASSRQLQRPSKKVRSNELVGRPLTLPRLLETLDPTALRTVLERICERHPDIGQEVVNSAPRPTVAAAHGVLQEYQDKMKAAIPYGETSPDYTYYRVKAPMTALIDALLDFTPQYLPPNETQTTVSLQYMDGATKIIHALPDWEPQQYRHHKENAYDEISKAWALVINEAAKRGGGLSLHTGGWDQTLAKHHEISGGRMGTAMNAMATSVSWMAHGGSSNGQQPGNPSSDQNSILNQLMSGTYGAPVRVGPW</sequence>
<dbReference type="EMBL" id="GG697343">
    <property type="protein sequence ID" value="EFQ28973.1"/>
    <property type="molecule type" value="Genomic_DNA"/>
</dbReference>
<dbReference type="RefSeq" id="XP_008092993.1">
    <property type="nucleotide sequence ID" value="XM_008094802.1"/>
</dbReference>
<dbReference type="SMR" id="E3QDN5"/>
<dbReference type="STRING" id="645133.E3QDN5"/>
<dbReference type="EnsemblFungi" id="EFQ28973">
    <property type="protein sequence ID" value="EFQ28973"/>
    <property type="gene ID" value="GLRG_04117"/>
</dbReference>
<dbReference type="GeneID" id="24409482"/>
<dbReference type="VEuPathDB" id="FungiDB:GLRG_04117"/>
<dbReference type="eggNOG" id="ENOG502RNK4">
    <property type="taxonomic scope" value="Eukaryota"/>
</dbReference>
<dbReference type="HOGENOM" id="CLU_033658_0_0_1"/>
<dbReference type="OrthoDB" id="10061064at2759"/>
<dbReference type="Proteomes" id="UP000008782">
    <property type="component" value="Unassembled WGS sequence"/>
</dbReference>
<dbReference type="GO" id="GO:0005737">
    <property type="term" value="C:cytoplasm"/>
    <property type="evidence" value="ECO:0007669"/>
    <property type="project" value="UniProtKB-SubCell"/>
</dbReference>
<dbReference type="GO" id="GO:0031965">
    <property type="term" value="C:nuclear membrane"/>
    <property type="evidence" value="ECO:0007669"/>
    <property type="project" value="TreeGrafter"/>
</dbReference>
<dbReference type="GO" id="GO:0070628">
    <property type="term" value="F:proteasome binding"/>
    <property type="evidence" value="ECO:0007669"/>
    <property type="project" value="TreeGrafter"/>
</dbReference>
<dbReference type="GO" id="GO:0071630">
    <property type="term" value="P:nuclear protein quality control by the ubiquitin-proteasome system"/>
    <property type="evidence" value="ECO:0007669"/>
    <property type="project" value="InterPro"/>
</dbReference>
<dbReference type="GO" id="GO:0031144">
    <property type="term" value="P:proteasome localization"/>
    <property type="evidence" value="ECO:0007669"/>
    <property type="project" value="InterPro"/>
</dbReference>
<dbReference type="GO" id="GO:0015031">
    <property type="term" value="P:protein transport"/>
    <property type="evidence" value="ECO:0007669"/>
    <property type="project" value="UniProtKB-KW"/>
</dbReference>
<dbReference type="FunFam" id="1.20.58.1590:FF:000001">
    <property type="entry name" value="Tethering factor for nuclear proteasome STS1"/>
    <property type="match status" value="1"/>
</dbReference>
<dbReference type="Gene3D" id="1.20.58.1590">
    <property type="entry name" value="Tethering factor for nuclear proteasome Cut8/Sts1"/>
    <property type="match status" value="1"/>
</dbReference>
<dbReference type="InterPro" id="IPR013868">
    <property type="entry name" value="Cut8/Sts1_fam"/>
</dbReference>
<dbReference type="InterPro" id="IPR038422">
    <property type="entry name" value="Cut8/Sts1_sf"/>
</dbReference>
<dbReference type="PANTHER" id="PTHR28032">
    <property type="entry name" value="FI02826P"/>
    <property type="match status" value="1"/>
</dbReference>
<dbReference type="PANTHER" id="PTHR28032:SF1">
    <property type="entry name" value="FI02826P"/>
    <property type="match status" value="1"/>
</dbReference>
<dbReference type="Pfam" id="PF08559">
    <property type="entry name" value="Cut8"/>
    <property type="match status" value="1"/>
</dbReference>